<protein>
    <recommendedName>
        <fullName evidence="1">Phosphatidylethanolamine N-methyltransferase</fullName>
        <shortName evidence="1">PE methyltransferase</shortName>
        <shortName evidence="1">PEAMT</shortName>
        <shortName evidence="1">PEMT</shortName>
        <ecNumber evidence="1">2.1.1.17</ecNumber>
    </recommendedName>
</protein>
<sequence length="965" mass="109106">MDRGLSTGTNQSGAGLRERAVTSQADLNVITENPTVTNASNGKDKAGKTFGRTPDGTVFTVPQTHDMVSQLLSPSEPKNLSDLVVLTILAGHIFLLWILPSGAKIPVFAVIYLFWRSCYNAGIGWLLHNQSHHKTLVRWAEKSQIFVNPATGKNPYPQLYHLIKRELEIKISKDYSFEEAPLEYNTWLVFRRLVDLILMCDFASYCLFAIACSRHPANESVLMTVIRWTSGIALVLFNLWVKLDAHRVVKDYAWYWGDFFYLIDQELTFDGVFEMAPHPMYSVGYAGYYGISLMAASYKVLFISIIAHAAQFAFLVLVENPHIDKTYNPPPPRKRTITEHDAASQRSQSPDTPNAPSVSEENVPNATTFSSPPPAVHNLLGFHNLDLHRITDTSSILVQFLMFSLTVLTPSTPWYQFLFVANAAIWRLWYSVGIGYLLNRQSNCKSWTRHFVKYGETPHEAWNQWKGTYHLSMVMCYASFISAVWKMYTLPSNWGYGLAILRHVLGAGLISLQIWTSVSIYESLGEFGWFYGDFFFDESPKLTYNGIYRFLNNPERVLGLAGVWGAVLITASGTVAFLAFLSHILSLGFIQFVERPHMQKLYGRSLRQDAGLVKSLKRSLPPSLRQLHGSVDKIFDESYEFIEEIIDTARPKLAAGVNTFVRDTTALFQKYPARVTISRIDADLAGYDLRDYSLTVEASQLPLDEGDLSKEGDNARTPLDRRGDLENLVFPYGTPVKVKWTAPLNHSKKDWIGLYKVTDNTSREVTRVSSQGRWVAVNEGFYDNLTCERGILISDVVVSTSQGDNGEKHDIATGEVVFSGDKLFWTQGVFEFRYHHNGKHNVMAISRPFEVRIPRFEEEDHFDMSQTAVETSLLPVIQNCFDRDPEIAPETPEEQYGSLVERDGKFAKRVVFAVHQMFGVEFAPEVVRSDGNVRNLAWRICNAKRVLAPYSMSRDGATTPTESKE</sequence>
<proteinExistence type="inferred from homology"/>
<evidence type="ECO:0000255" key="1">
    <source>
        <dbReference type="HAMAP-Rule" id="MF_03217"/>
    </source>
</evidence>
<evidence type="ECO:0000256" key="2">
    <source>
        <dbReference type="SAM" id="MobiDB-lite"/>
    </source>
</evidence>
<evidence type="ECO:0000303" key="3">
    <source>
    </source>
</evidence>
<evidence type="ECO:0000305" key="4"/>
<evidence type="ECO:0000305" key="5">
    <source>
    </source>
</evidence>
<name>CHO2_EMENI</name>
<feature type="chain" id="PRO_0000405890" description="Phosphatidylethanolamine N-methyltransferase">
    <location>
        <begin position="1"/>
        <end position="965"/>
    </location>
</feature>
<feature type="topological domain" description="Lumenal" evidence="1">
    <location>
        <begin position="1"/>
        <end position="82"/>
    </location>
</feature>
<feature type="transmembrane region" description="Helical" evidence="1">
    <location>
        <begin position="83"/>
        <end position="103"/>
    </location>
</feature>
<feature type="topological domain" description="Cytoplasmic" evidence="1">
    <location>
        <begin position="104"/>
        <end position="106"/>
    </location>
</feature>
<feature type="transmembrane region" description="Helical" evidence="1">
    <location>
        <begin position="107"/>
        <end position="127"/>
    </location>
</feature>
<feature type="topological domain" description="Lumenal" evidence="1">
    <location>
        <begin position="128"/>
        <end position="192"/>
    </location>
</feature>
<feature type="transmembrane region" description="Helical" evidence="1">
    <location>
        <begin position="193"/>
        <end position="213"/>
    </location>
</feature>
<feature type="topological domain" description="Cytoplasmic" evidence="1">
    <location>
        <begin position="214"/>
        <end position="220"/>
    </location>
</feature>
<feature type="transmembrane region" description="Helical" evidence="1">
    <location>
        <begin position="221"/>
        <end position="241"/>
    </location>
</feature>
<feature type="topological domain" description="Lumenal" evidence="1">
    <location>
        <begin position="242"/>
        <end position="274"/>
    </location>
</feature>
<feature type="transmembrane region" description="Helical" evidence="1">
    <location>
        <begin position="275"/>
        <end position="295"/>
    </location>
</feature>
<feature type="topological domain" description="Cytoplasmic" evidence="1">
    <location>
        <begin position="296"/>
        <end position="297"/>
    </location>
</feature>
<feature type="transmembrane region" description="Helical" evidence="1">
    <location>
        <begin position="298"/>
        <end position="318"/>
    </location>
</feature>
<feature type="topological domain" description="Lumenal" evidence="1">
    <location>
        <begin position="319"/>
        <end position="394"/>
    </location>
</feature>
<feature type="transmembrane region" description="Helical" evidence="1">
    <location>
        <begin position="395"/>
        <end position="415"/>
    </location>
</feature>
<feature type="topological domain" description="Cytoplasmic" evidence="1">
    <location>
        <position position="416"/>
    </location>
</feature>
<feature type="transmembrane region" description="Helical" evidence="1">
    <location>
        <begin position="417"/>
        <end position="437"/>
    </location>
</feature>
<feature type="topological domain" description="Lumenal" evidence="1">
    <location>
        <begin position="438"/>
        <end position="470"/>
    </location>
</feature>
<feature type="transmembrane region" description="Helical" evidence="1">
    <location>
        <begin position="471"/>
        <end position="491"/>
    </location>
</feature>
<feature type="topological domain" description="Cytoplasmic" evidence="1">
    <location>
        <begin position="492"/>
        <end position="503"/>
    </location>
</feature>
<feature type="transmembrane region" description="Helical" evidence="1">
    <location>
        <begin position="504"/>
        <end position="524"/>
    </location>
</feature>
<feature type="topological domain" description="Lumenal" evidence="1">
    <location>
        <begin position="525"/>
        <end position="559"/>
    </location>
</feature>
<feature type="transmembrane region" description="Helical" evidence="1">
    <location>
        <begin position="560"/>
        <end position="580"/>
    </location>
</feature>
<feature type="topological domain" description="Cytoplasmic" evidence="1">
    <location>
        <begin position="581"/>
        <end position="965"/>
    </location>
</feature>
<feature type="region of interest" description="Disordered" evidence="2">
    <location>
        <begin position="34"/>
        <end position="54"/>
    </location>
</feature>
<feature type="region of interest" description="Disordered" evidence="2">
    <location>
        <begin position="326"/>
        <end position="368"/>
    </location>
</feature>
<feature type="compositionally biased region" description="Polar residues" evidence="2">
    <location>
        <begin position="344"/>
        <end position="368"/>
    </location>
</feature>
<comment type="function">
    <text evidence="1 5">Catalyzes the first step of the methylation pathway of phosphatidylcholine biosynthesis, the SAM-dependent methylation of phosphatidylethanolamine (PE) to phosphatidylmonomethylethanolamine (PMME).</text>
</comment>
<comment type="catalytic activity">
    <reaction evidence="1">
        <text>a 1,2-diacyl-sn-glycero-3-phosphoethanolamine + S-adenosyl-L-methionine = a 1,2-diacyl-sn-glycero-3-phospho-N-methylethanolamine + S-adenosyl-L-homocysteine + H(+)</text>
        <dbReference type="Rhea" id="RHEA:11164"/>
        <dbReference type="ChEBI" id="CHEBI:15378"/>
        <dbReference type="ChEBI" id="CHEBI:57856"/>
        <dbReference type="ChEBI" id="CHEBI:59789"/>
        <dbReference type="ChEBI" id="CHEBI:64573"/>
        <dbReference type="ChEBI" id="CHEBI:64612"/>
        <dbReference type="EC" id="2.1.1.17"/>
    </reaction>
</comment>
<comment type="pathway">
    <text evidence="1 5">Phospholipid metabolism; phosphatidylcholine biosynthesis.</text>
</comment>
<comment type="subcellular location">
    <subcellularLocation>
        <location evidence="1">Endoplasmic reticulum membrane</location>
        <topology evidence="1">Multi-pass membrane protein</topology>
    </subcellularLocation>
</comment>
<comment type="similarity">
    <text evidence="1">Belongs to the class VI-like SAM-binding methyltransferase superfamily. CHO2 family.</text>
</comment>
<comment type="sequence caution" evidence="4">
    <conflict type="frameshift">
        <sequence resource="EMBL" id="BN001307"/>
    </conflict>
</comment>
<comment type="sequence caution" evidence="4">
    <conflict type="frameshift">
        <sequence resource="EMBL-CDS" id="EAA64198"/>
    </conflict>
</comment>
<keyword id="KW-0256">Endoplasmic reticulum</keyword>
<keyword id="KW-0444">Lipid biosynthesis</keyword>
<keyword id="KW-0443">Lipid metabolism</keyword>
<keyword id="KW-0472">Membrane</keyword>
<keyword id="KW-0489">Methyltransferase</keyword>
<keyword id="KW-0594">Phospholipid biosynthesis</keyword>
<keyword id="KW-1208">Phospholipid metabolism</keyword>
<keyword id="KW-1185">Reference proteome</keyword>
<keyword id="KW-0949">S-adenosyl-L-methionine</keyword>
<keyword id="KW-0808">Transferase</keyword>
<keyword id="KW-0812">Transmembrane</keyword>
<keyword id="KW-1133">Transmembrane helix</keyword>
<gene>
    <name evidence="3" type="primary">choA</name>
    <name type="ORF">AN2154</name>
</gene>
<organism>
    <name type="scientific">Emericella nidulans (strain FGSC A4 / ATCC 38163 / CBS 112.46 / NRRL 194 / M139)</name>
    <name type="common">Aspergillus nidulans</name>
    <dbReference type="NCBI Taxonomy" id="227321"/>
    <lineage>
        <taxon>Eukaryota</taxon>
        <taxon>Fungi</taxon>
        <taxon>Dikarya</taxon>
        <taxon>Ascomycota</taxon>
        <taxon>Pezizomycotina</taxon>
        <taxon>Eurotiomycetes</taxon>
        <taxon>Eurotiomycetidae</taxon>
        <taxon>Eurotiales</taxon>
        <taxon>Aspergillaceae</taxon>
        <taxon>Aspergillus</taxon>
        <taxon>Aspergillus subgen. Nidulantes</taxon>
    </lineage>
</organism>
<accession>Q5BBC6</accession>
<dbReference type="EC" id="2.1.1.17" evidence="1"/>
<dbReference type="EMBL" id="AACD01000034">
    <property type="protein sequence ID" value="EAA64198.1"/>
    <property type="status" value="ALT_FRAME"/>
    <property type="molecule type" value="Genomic_DNA"/>
</dbReference>
<dbReference type="EMBL" id="BN001307">
    <property type="status" value="NOT_ANNOTATED_CDS"/>
    <property type="molecule type" value="Genomic_DNA"/>
</dbReference>
<dbReference type="RefSeq" id="XP_659758.1">
    <property type="nucleotide sequence ID" value="XM_654666.1"/>
</dbReference>
<dbReference type="SMR" id="Q5BBC6"/>
<dbReference type="FunCoup" id="Q5BBC6">
    <property type="interactions" value="63"/>
</dbReference>
<dbReference type="STRING" id="227321.Q5BBC6"/>
<dbReference type="HOGENOM" id="CLU_005987_0_0_1"/>
<dbReference type="InParanoid" id="Q5BBC6"/>
<dbReference type="UniPathway" id="UPA00753"/>
<dbReference type="Proteomes" id="UP000000560">
    <property type="component" value="Chromosome VII"/>
</dbReference>
<dbReference type="GO" id="GO:0005789">
    <property type="term" value="C:endoplasmic reticulum membrane"/>
    <property type="evidence" value="ECO:0007669"/>
    <property type="project" value="UniProtKB-SubCell"/>
</dbReference>
<dbReference type="GO" id="GO:0004608">
    <property type="term" value="F:phosphatidylethanolamine N-methyltransferase activity"/>
    <property type="evidence" value="ECO:0000318"/>
    <property type="project" value="GO_Central"/>
</dbReference>
<dbReference type="GO" id="GO:0032259">
    <property type="term" value="P:methylation"/>
    <property type="evidence" value="ECO:0007669"/>
    <property type="project" value="UniProtKB-KW"/>
</dbReference>
<dbReference type="GO" id="GO:0006656">
    <property type="term" value="P:phosphatidylcholine biosynthetic process"/>
    <property type="evidence" value="ECO:0000318"/>
    <property type="project" value="GO_Central"/>
</dbReference>
<dbReference type="FunFam" id="2.60.40.2840:FF:000006">
    <property type="entry name" value="Phosphatidylethanolamine N-methyltransferase"/>
    <property type="match status" value="1"/>
</dbReference>
<dbReference type="Gene3D" id="2.60.40.2840">
    <property type="match status" value="1"/>
</dbReference>
<dbReference type="HAMAP" id="MF_03217">
    <property type="entry name" value="PEMT"/>
    <property type="match status" value="1"/>
</dbReference>
<dbReference type="InterPro" id="IPR007318">
    <property type="entry name" value="Phopholipid_MeTrfase"/>
</dbReference>
<dbReference type="InterPro" id="IPR016219">
    <property type="entry name" value="Phosphatid-EA_MeTrfase_fun"/>
</dbReference>
<dbReference type="PANTHER" id="PTHR32138">
    <property type="entry name" value="PHOSPHATIDYLETHANOLAMINE N-METHYLTRANSFERASE"/>
    <property type="match status" value="1"/>
</dbReference>
<dbReference type="PANTHER" id="PTHR32138:SF0">
    <property type="entry name" value="PHOSPHATIDYLETHANOLAMINE N-METHYLTRANSFERASE"/>
    <property type="match status" value="1"/>
</dbReference>
<dbReference type="Pfam" id="PF04191">
    <property type="entry name" value="PEMT"/>
    <property type="match status" value="2"/>
</dbReference>
<dbReference type="PIRSF" id="PIRSF000383">
    <property type="entry name" value="PEAMT"/>
    <property type="match status" value="1"/>
</dbReference>
<dbReference type="PROSITE" id="PS51598">
    <property type="entry name" value="SAM_CHO2"/>
    <property type="match status" value="1"/>
</dbReference>
<reference key="1">
    <citation type="journal article" date="2005" name="Nature">
        <title>Sequencing of Aspergillus nidulans and comparative analysis with A. fumigatus and A. oryzae.</title>
        <authorList>
            <person name="Galagan J.E."/>
            <person name="Calvo S.E."/>
            <person name="Cuomo C."/>
            <person name="Ma L.-J."/>
            <person name="Wortman J.R."/>
            <person name="Batzoglou S."/>
            <person name="Lee S.-I."/>
            <person name="Bastuerkmen M."/>
            <person name="Spevak C.C."/>
            <person name="Clutterbuck J."/>
            <person name="Kapitonov V."/>
            <person name="Jurka J."/>
            <person name="Scazzocchio C."/>
            <person name="Farman M.L."/>
            <person name="Butler J."/>
            <person name="Purcell S."/>
            <person name="Harris S."/>
            <person name="Braus G.H."/>
            <person name="Draht O."/>
            <person name="Busch S."/>
            <person name="D'Enfert C."/>
            <person name="Bouchier C."/>
            <person name="Goldman G.H."/>
            <person name="Bell-Pedersen D."/>
            <person name="Griffiths-Jones S."/>
            <person name="Doonan J.H."/>
            <person name="Yu J."/>
            <person name="Vienken K."/>
            <person name="Pain A."/>
            <person name="Freitag M."/>
            <person name="Selker E.U."/>
            <person name="Archer D.B."/>
            <person name="Penalva M.A."/>
            <person name="Oakley B.R."/>
            <person name="Momany M."/>
            <person name="Tanaka T."/>
            <person name="Kumagai T."/>
            <person name="Asai K."/>
            <person name="Machida M."/>
            <person name="Nierman W.C."/>
            <person name="Denning D.W."/>
            <person name="Caddick M.X."/>
            <person name="Hynes M."/>
            <person name="Paoletti M."/>
            <person name="Fischer R."/>
            <person name="Miller B.L."/>
            <person name="Dyer P.S."/>
            <person name="Sachs M.S."/>
            <person name="Osmani S.A."/>
            <person name="Birren B.W."/>
        </authorList>
    </citation>
    <scope>NUCLEOTIDE SEQUENCE [LARGE SCALE GENOMIC DNA]</scope>
    <source>
        <strain>FGSC A4 / ATCC 38163 / CBS 112.46 / NRRL 194 / M139</strain>
    </source>
</reference>
<reference key="2">
    <citation type="journal article" date="2009" name="Fungal Genet. Biol.">
        <title>The 2008 update of the Aspergillus nidulans genome annotation: a community effort.</title>
        <authorList>
            <person name="Wortman J.R."/>
            <person name="Gilsenan J.M."/>
            <person name="Joardar V."/>
            <person name="Deegan J."/>
            <person name="Clutterbuck J."/>
            <person name="Andersen M.R."/>
            <person name="Archer D."/>
            <person name="Bencina M."/>
            <person name="Braus G."/>
            <person name="Coutinho P."/>
            <person name="von Dohren H."/>
            <person name="Doonan J."/>
            <person name="Driessen A.J."/>
            <person name="Durek P."/>
            <person name="Espeso E."/>
            <person name="Fekete E."/>
            <person name="Flipphi M."/>
            <person name="Estrada C.G."/>
            <person name="Geysens S."/>
            <person name="Goldman G."/>
            <person name="de Groot P.W."/>
            <person name="Hansen K."/>
            <person name="Harris S.D."/>
            <person name="Heinekamp T."/>
            <person name="Helmstaedt K."/>
            <person name="Henrissat B."/>
            <person name="Hofmann G."/>
            <person name="Homan T."/>
            <person name="Horio T."/>
            <person name="Horiuchi H."/>
            <person name="James S."/>
            <person name="Jones M."/>
            <person name="Karaffa L."/>
            <person name="Karanyi Z."/>
            <person name="Kato M."/>
            <person name="Keller N."/>
            <person name="Kelly D.E."/>
            <person name="Kiel J.A."/>
            <person name="Kim J.M."/>
            <person name="van der Klei I.J."/>
            <person name="Klis F.M."/>
            <person name="Kovalchuk A."/>
            <person name="Krasevec N."/>
            <person name="Kubicek C.P."/>
            <person name="Liu B."/>
            <person name="Maccabe A."/>
            <person name="Meyer V."/>
            <person name="Mirabito P."/>
            <person name="Miskei M."/>
            <person name="Mos M."/>
            <person name="Mullins J."/>
            <person name="Nelson D.R."/>
            <person name="Nielsen J."/>
            <person name="Oakley B.R."/>
            <person name="Osmani S.A."/>
            <person name="Pakula T."/>
            <person name="Paszewski A."/>
            <person name="Paulsen I."/>
            <person name="Pilsyk S."/>
            <person name="Pocsi I."/>
            <person name="Punt P.J."/>
            <person name="Ram A.F."/>
            <person name="Ren Q."/>
            <person name="Robellet X."/>
            <person name="Robson G."/>
            <person name="Seiboth B."/>
            <person name="van Solingen P."/>
            <person name="Specht T."/>
            <person name="Sun J."/>
            <person name="Taheri-Talesh N."/>
            <person name="Takeshita N."/>
            <person name="Ussery D."/>
            <person name="vanKuyk P.A."/>
            <person name="Visser H."/>
            <person name="van de Vondervoort P.J."/>
            <person name="de Vries R.P."/>
            <person name="Walton J."/>
            <person name="Xiang X."/>
            <person name="Xiong Y."/>
            <person name="Zeng A.P."/>
            <person name="Brandt B.W."/>
            <person name="Cornell M.J."/>
            <person name="van den Hondel C.A."/>
            <person name="Visser J."/>
            <person name="Oliver S.G."/>
            <person name="Turner G."/>
        </authorList>
    </citation>
    <scope>GENOME REANNOTATION</scope>
    <source>
        <strain>FGSC A4 / ATCC 38163 / CBS 112.46 / NRRL 194 / M139</strain>
    </source>
</reference>
<reference key="3">
    <citation type="journal article" date="1978" name="Genet. Res.">
        <title>Characterization of a new choline locus in Aspergillus nidulans and its significance for choline metabolism.</title>
        <authorList>
            <person name="Markham P."/>
            <person name="Bainbridge B.W."/>
        </authorList>
    </citation>
    <scope>FUNCTION</scope>
    <scope>PATHWAY</scope>
</reference>